<proteinExistence type="inferred from homology"/>
<name>SRP54_METM5</name>
<gene>
    <name evidence="1" type="primary">srp54</name>
    <name type="ordered locus">MmarC5_0025</name>
</gene>
<comment type="function">
    <text evidence="1">Involved in targeting and insertion of nascent membrane proteins into the cytoplasmic membrane. Binds to the hydrophobic signal sequence of the ribosome-nascent chain (RNC) as it emerges from the ribosomes. The SRP-RNC complex is then targeted to the cytoplasmic membrane where it interacts with the SRP receptor FtsY.</text>
</comment>
<comment type="catalytic activity">
    <reaction evidence="1">
        <text>GTP + H2O = GDP + phosphate + H(+)</text>
        <dbReference type="Rhea" id="RHEA:19669"/>
        <dbReference type="ChEBI" id="CHEBI:15377"/>
        <dbReference type="ChEBI" id="CHEBI:15378"/>
        <dbReference type="ChEBI" id="CHEBI:37565"/>
        <dbReference type="ChEBI" id="CHEBI:43474"/>
        <dbReference type="ChEBI" id="CHEBI:58189"/>
        <dbReference type="EC" id="3.6.5.4"/>
    </reaction>
</comment>
<comment type="subunit">
    <text evidence="1">Part of the signal recognition particle protein translocation system, which is composed of SRP and FtsY. Archaeal SRP consists of a 7S RNA molecule of 300 nucleotides and two protein subunits: SRP54 and SRP19.</text>
</comment>
<comment type="subcellular location">
    <subcellularLocation>
        <location evidence="1">Cytoplasm</location>
    </subcellularLocation>
    <text evidence="1">The SRP-RNC complex is targeted to the cytoplasmic membrane.</text>
</comment>
<comment type="domain">
    <text evidence="1">Composed of three domains: the N-terminal N domain, which is responsible for interactions with the ribosome, the central G domain, which binds GTP, and the C-terminal M domain, which binds the RNA and the signal sequence of the RNC.</text>
</comment>
<comment type="similarity">
    <text evidence="1">Belongs to the GTP-binding SRP family. SRP54 subfamily.</text>
</comment>
<reference key="1">
    <citation type="submission" date="2007-03" db="EMBL/GenBank/DDBJ databases">
        <title>Complete sequence of chromosome of Methanococcus maripaludis C5.</title>
        <authorList>
            <consortium name="US DOE Joint Genome Institute"/>
            <person name="Copeland A."/>
            <person name="Lucas S."/>
            <person name="Lapidus A."/>
            <person name="Barry K."/>
            <person name="Glavina del Rio T."/>
            <person name="Dalin E."/>
            <person name="Tice H."/>
            <person name="Pitluck S."/>
            <person name="Chertkov O."/>
            <person name="Brettin T."/>
            <person name="Bruce D."/>
            <person name="Han C."/>
            <person name="Detter J.C."/>
            <person name="Schmutz J."/>
            <person name="Larimer F."/>
            <person name="Land M."/>
            <person name="Hauser L."/>
            <person name="Kyrpides N."/>
            <person name="Mikhailova N."/>
            <person name="Sieprawska-Lupa M."/>
            <person name="Whitman W.B."/>
            <person name="Richardson P."/>
        </authorList>
    </citation>
    <scope>NUCLEOTIDE SEQUENCE [LARGE SCALE GENOMIC DNA]</scope>
    <source>
        <strain>C5 / ATCC BAA-1333</strain>
    </source>
</reference>
<evidence type="ECO:0000255" key="1">
    <source>
        <dbReference type="HAMAP-Rule" id="MF_00306"/>
    </source>
</evidence>
<sequence length="450" mass="49881">MLDKLGQNLSDALNKIKNATFVDKKLVKEVIKDIQKALIQSDVNVKLVFNMSKEIERKAIEEAPPKGLSKKEHIVKIVYDELVKLLGETTQKLELDPSKKSVILLIGIQGSGKTTSAAKLARYIQKKGLRPGLIAADVYRPAAYQQLKQLSEKINVPLFGDETRTKTPVDITKEGMEKLKKVDVIIIDTAGRHKEEESLLAEMKEMKDLTNPNEIILVIDGTLGQQAKNQAKAFKESVSEIGSILVTKLDGSAKGGGALSAVAEINAPIKFIGTGEGVDNLEQFDPKKFISRILGLGDLDSLLEKTEDIMDESTEESIDSILKGKFTLIELYAQLETISKMGPMKQILSMIPGMGGNLPKEAAQLTEDKLKRYKIMMDSMTLEEKENPELIKTSRLQRIAKGAGVKQDEIKDLLKYYSTTKNAFGNLKRGKMPKMGGQMGQIMRQLMYKD</sequence>
<feature type="chain" id="PRO_1000022787" description="Signal recognition particle 54 kDa protein">
    <location>
        <begin position="1"/>
        <end position="450"/>
    </location>
</feature>
<feature type="binding site" evidence="1">
    <location>
        <begin position="107"/>
        <end position="114"/>
    </location>
    <ligand>
        <name>GTP</name>
        <dbReference type="ChEBI" id="CHEBI:37565"/>
    </ligand>
</feature>
<feature type="binding site" evidence="1">
    <location>
        <begin position="188"/>
        <end position="192"/>
    </location>
    <ligand>
        <name>GTP</name>
        <dbReference type="ChEBI" id="CHEBI:37565"/>
    </ligand>
</feature>
<feature type="binding site" evidence="1">
    <location>
        <begin position="247"/>
        <end position="250"/>
    </location>
    <ligand>
        <name>GTP</name>
        <dbReference type="ChEBI" id="CHEBI:37565"/>
    </ligand>
</feature>
<keyword id="KW-0963">Cytoplasm</keyword>
<keyword id="KW-0342">GTP-binding</keyword>
<keyword id="KW-0378">Hydrolase</keyword>
<keyword id="KW-0547">Nucleotide-binding</keyword>
<keyword id="KW-0687">Ribonucleoprotein</keyword>
<keyword id="KW-0694">RNA-binding</keyword>
<keyword id="KW-0733">Signal recognition particle</keyword>
<protein>
    <recommendedName>
        <fullName evidence="1">Signal recognition particle 54 kDa protein</fullName>
        <shortName evidence="1">SRP54</shortName>
        <ecNumber evidence="1">3.6.5.4</ecNumber>
    </recommendedName>
</protein>
<accession>A4FVX4</accession>
<dbReference type="EC" id="3.6.5.4" evidence="1"/>
<dbReference type="EMBL" id="CP000609">
    <property type="protein sequence ID" value="ABO34342.1"/>
    <property type="molecule type" value="Genomic_DNA"/>
</dbReference>
<dbReference type="RefSeq" id="WP_011867804.1">
    <property type="nucleotide sequence ID" value="NC_009135.1"/>
</dbReference>
<dbReference type="SMR" id="A4FVX4"/>
<dbReference type="STRING" id="402880.MmarC5_0025"/>
<dbReference type="GeneID" id="4927616"/>
<dbReference type="KEGG" id="mmq:MmarC5_0025"/>
<dbReference type="eggNOG" id="arCOG01228">
    <property type="taxonomic scope" value="Archaea"/>
</dbReference>
<dbReference type="HOGENOM" id="CLU_009301_6_0_2"/>
<dbReference type="OrthoDB" id="52849at2157"/>
<dbReference type="Proteomes" id="UP000000253">
    <property type="component" value="Chromosome"/>
</dbReference>
<dbReference type="GO" id="GO:0048500">
    <property type="term" value="C:signal recognition particle"/>
    <property type="evidence" value="ECO:0007669"/>
    <property type="project" value="UniProtKB-UniRule"/>
</dbReference>
<dbReference type="GO" id="GO:0008312">
    <property type="term" value="F:7S RNA binding"/>
    <property type="evidence" value="ECO:0007669"/>
    <property type="project" value="UniProtKB-UniRule"/>
</dbReference>
<dbReference type="GO" id="GO:0016887">
    <property type="term" value="F:ATP hydrolysis activity"/>
    <property type="evidence" value="ECO:0007669"/>
    <property type="project" value="InterPro"/>
</dbReference>
<dbReference type="GO" id="GO:0005525">
    <property type="term" value="F:GTP binding"/>
    <property type="evidence" value="ECO:0007669"/>
    <property type="project" value="UniProtKB-UniRule"/>
</dbReference>
<dbReference type="GO" id="GO:0003924">
    <property type="term" value="F:GTPase activity"/>
    <property type="evidence" value="ECO:0007669"/>
    <property type="project" value="UniProtKB-UniRule"/>
</dbReference>
<dbReference type="GO" id="GO:0006614">
    <property type="term" value="P:SRP-dependent cotranslational protein targeting to membrane"/>
    <property type="evidence" value="ECO:0007669"/>
    <property type="project" value="InterPro"/>
</dbReference>
<dbReference type="CDD" id="cd17875">
    <property type="entry name" value="SRP54_G"/>
    <property type="match status" value="1"/>
</dbReference>
<dbReference type="FunFam" id="3.40.50.300:FF:000022">
    <property type="entry name" value="Signal recognition particle 54 kDa subunit"/>
    <property type="match status" value="1"/>
</dbReference>
<dbReference type="Gene3D" id="3.40.50.300">
    <property type="entry name" value="P-loop containing nucleotide triphosphate hydrolases"/>
    <property type="match status" value="1"/>
</dbReference>
<dbReference type="Gene3D" id="1.20.120.140">
    <property type="entry name" value="Signal recognition particle SRP54, nucleotide-binding domain"/>
    <property type="match status" value="1"/>
</dbReference>
<dbReference type="Gene3D" id="1.10.260.30">
    <property type="entry name" value="Signal recognition particle, SRP54 subunit, M-domain"/>
    <property type="match status" value="1"/>
</dbReference>
<dbReference type="HAMAP" id="MF_00306">
    <property type="entry name" value="SRP54"/>
    <property type="match status" value="1"/>
</dbReference>
<dbReference type="InterPro" id="IPR003593">
    <property type="entry name" value="AAA+_ATPase"/>
</dbReference>
<dbReference type="InterPro" id="IPR027417">
    <property type="entry name" value="P-loop_NTPase"/>
</dbReference>
<dbReference type="InterPro" id="IPR036891">
    <property type="entry name" value="Signal_recog_part_SRP54_M_sf"/>
</dbReference>
<dbReference type="InterPro" id="IPR013822">
    <property type="entry name" value="Signal_recog_particl_SRP54_hlx"/>
</dbReference>
<dbReference type="InterPro" id="IPR004125">
    <property type="entry name" value="Signal_recog_particle_SRP54_M"/>
</dbReference>
<dbReference type="InterPro" id="IPR036225">
    <property type="entry name" value="SRP/SRP_N"/>
</dbReference>
<dbReference type="InterPro" id="IPR022941">
    <property type="entry name" value="SRP54"/>
</dbReference>
<dbReference type="InterPro" id="IPR000897">
    <property type="entry name" value="SRP54_GTPase_dom"/>
</dbReference>
<dbReference type="InterPro" id="IPR042101">
    <property type="entry name" value="SRP54_N_sf"/>
</dbReference>
<dbReference type="PANTHER" id="PTHR11564">
    <property type="entry name" value="SIGNAL RECOGNITION PARTICLE 54K PROTEIN SRP54"/>
    <property type="match status" value="1"/>
</dbReference>
<dbReference type="PANTHER" id="PTHR11564:SF5">
    <property type="entry name" value="SIGNAL RECOGNITION PARTICLE SUBUNIT SRP54"/>
    <property type="match status" value="1"/>
</dbReference>
<dbReference type="Pfam" id="PF00448">
    <property type="entry name" value="SRP54"/>
    <property type="match status" value="1"/>
</dbReference>
<dbReference type="Pfam" id="PF02881">
    <property type="entry name" value="SRP54_N"/>
    <property type="match status" value="1"/>
</dbReference>
<dbReference type="Pfam" id="PF02978">
    <property type="entry name" value="SRP_SPB"/>
    <property type="match status" value="1"/>
</dbReference>
<dbReference type="SMART" id="SM00382">
    <property type="entry name" value="AAA"/>
    <property type="match status" value="1"/>
</dbReference>
<dbReference type="SMART" id="SM00962">
    <property type="entry name" value="SRP54"/>
    <property type="match status" value="1"/>
</dbReference>
<dbReference type="SMART" id="SM00963">
    <property type="entry name" value="SRP54_N"/>
    <property type="match status" value="1"/>
</dbReference>
<dbReference type="SUPFAM" id="SSF47364">
    <property type="entry name" value="Domain of the SRP/SRP receptor G-proteins"/>
    <property type="match status" value="1"/>
</dbReference>
<dbReference type="SUPFAM" id="SSF52540">
    <property type="entry name" value="P-loop containing nucleoside triphosphate hydrolases"/>
    <property type="match status" value="1"/>
</dbReference>
<dbReference type="SUPFAM" id="SSF47446">
    <property type="entry name" value="Signal peptide-binding domain"/>
    <property type="match status" value="1"/>
</dbReference>
<dbReference type="PROSITE" id="PS00300">
    <property type="entry name" value="SRP54"/>
    <property type="match status" value="1"/>
</dbReference>
<organism>
    <name type="scientific">Methanococcus maripaludis (strain C5 / ATCC BAA-1333)</name>
    <dbReference type="NCBI Taxonomy" id="402880"/>
    <lineage>
        <taxon>Archaea</taxon>
        <taxon>Methanobacteriati</taxon>
        <taxon>Methanobacteriota</taxon>
        <taxon>Methanomada group</taxon>
        <taxon>Methanococci</taxon>
        <taxon>Methanococcales</taxon>
        <taxon>Methanococcaceae</taxon>
        <taxon>Methanococcus</taxon>
    </lineage>
</organism>